<organism>
    <name type="scientific">Caenorhabditis elegans</name>
    <dbReference type="NCBI Taxonomy" id="6239"/>
    <lineage>
        <taxon>Eukaryota</taxon>
        <taxon>Metazoa</taxon>
        <taxon>Ecdysozoa</taxon>
        <taxon>Nematoda</taxon>
        <taxon>Chromadorea</taxon>
        <taxon>Rhabditida</taxon>
        <taxon>Rhabditina</taxon>
        <taxon>Rhabditomorpha</taxon>
        <taxon>Rhabditoidea</taxon>
        <taxon>Rhabditidae</taxon>
        <taxon>Peloderinae</taxon>
        <taxon>Caenorhabditis</taxon>
    </lineage>
</organism>
<accession>Q9U3N4</accession>
<accession>Q17395</accession>
<proteinExistence type="evidence at protein level"/>
<evidence type="ECO:0000250" key="1"/>
<evidence type="ECO:0000250" key="2">
    <source>
        <dbReference type="UniProtKB" id="O61715"/>
    </source>
</evidence>
<evidence type="ECO:0000255" key="3">
    <source>
        <dbReference type="PROSITE-ProRule" id="PRU00351"/>
    </source>
</evidence>
<evidence type="ECO:0000305" key="4"/>
<evidence type="ECO:0007829" key="5">
    <source>
        <dbReference type="PDB" id="5H1Q"/>
    </source>
</evidence>
<feature type="chain" id="PRO_0000208508" description="Innexin-6">
    <location>
        <begin position="1"/>
        <end position="389"/>
    </location>
</feature>
<feature type="transmembrane region" description="Helical" evidence="3">
    <location>
        <begin position="36"/>
        <end position="56"/>
    </location>
</feature>
<feature type="transmembrane region" description="Helical" evidence="3">
    <location>
        <begin position="111"/>
        <end position="131"/>
    </location>
</feature>
<feature type="transmembrane region" description="Helical" evidence="3">
    <location>
        <begin position="190"/>
        <end position="210"/>
    </location>
</feature>
<feature type="transmembrane region" description="Helical" evidence="3">
    <location>
        <begin position="276"/>
        <end position="296"/>
    </location>
</feature>
<feature type="helix" evidence="5">
    <location>
        <begin position="13"/>
        <end position="19"/>
    </location>
</feature>
<feature type="helix" evidence="5">
    <location>
        <begin position="31"/>
        <end position="46"/>
    </location>
</feature>
<feature type="turn" evidence="5">
    <location>
        <begin position="47"/>
        <end position="50"/>
    </location>
</feature>
<feature type="strand" evidence="5">
    <location>
        <begin position="56"/>
        <end position="58"/>
    </location>
</feature>
<feature type="helix" evidence="5">
    <location>
        <begin position="69"/>
        <end position="78"/>
    </location>
</feature>
<feature type="strand" evidence="5">
    <location>
        <begin position="86"/>
        <end position="88"/>
    </location>
</feature>
<feature type="turn" evidence="5">
    <location>
        <begin position="93"/>
        <end position="98"/>
    </location>
</feature>
<feature type="turn" evidence="5">
    <location>
        <begin position="105"/>
        <end position="107"/>
    </location>
</feature>
<feature type="helix" evidence="5">
    <location>
        <begin position="108"/>
        <end position="133"/>
    </location>
</feature>
<feature type="helix" evidence="5">
    <location>
        <begin position="137"/>
        <end position="150"/>
    </location>
</feature>
<feature type="turn" evidence="5">
    <location>
        <begin position="151"/>
        <end position="153"/>
    </location>
</feature>
<feature type="helix" evidence="5">
    <location>
        <begin position="161"/>
        <end position="181"/>
    </location>
</feature>
<feature type="turn" evidence="5">
    <location>
        <begin position="182"/>
        <end position="184"/>
    </location>
</feature>
<feature type="helix" evidence="5">
    <location>
        <begin position="188"/>
        <end position="212"/>
    </location>
</feature>
<feature type="helix" evidence="5">
    <location>
        <begin position="223"/>
        <end position="230"/>
    </location>
</feature>
<feature type="turn" evidence="5">
    <location>
        <begin position="231"/>
        <end position="233"/>
    </location>
</feature>
<feature type="turn" evidence="5">
    <location>
        <begin position="235"/>
        <end position="239"/>
    </location>
</feature>
<feature type="strand" evidence="5">
    <location>
        <begin position="240"/>
        <end position="242"/>
    </location>
</feature>
<feature type="strand" evidence="5">
    <location>
        <begin position="244"/>
        <end position="247"/>
    </location>
</feature>
<feature type="strand" evidence="5">
    <location>
        <begin position="249"/>
        <end position="251"/>
    </location>
</feature>
<feature type="strand" evidence="5">
    <location>
        <begin position="254"/>
        <end position="256"/>
    </location>
</feature>
<feature type="strand" evidence="5">
    <location>
        <begin position="260"/>
        <end position="262"/>
    </location>
</feature>
<feature type="strand" evidence="5">
    <location>
        <begin position="265"/>
        <end position="268"/>
    </location>
</feature>
<feature type="helix" evidence="5">
    <location>
        <begin position="270"/>
        <end position="304"/>
    </location>
</feature>
<feature type="strand" evidence="5">
    <location>
        <begin position="306"/>
        <end position="309"/>
    </location>
</feature>
<feature type="helix" evidence="5">
    <location>
        <begin position="310"/>
        <end position="315"/>
    </location>
</feature>
<feature type="turn" evidence="5">
    <location>
        <begin position="316"/>
        <end position="318"/>
    </location>
</feature>
<feature type="helix" evidence="5">
    <location>
        <begin position="328"/>
        <end position="334"/>
    </location>
</feature>
<feature type="turn" evidence="5">
    <location>
        <begin position="335"/>
        <end position="337"/>
    </location>
</feature>
<feature type="helix" evidence="5">
    <location>
        <begin position="338"/>
        <end position="348"/>
    </location>
</feature>
<feature type="helix" evidence="5">
    <location>
        <begin position="352"/>
        <end position="364"/>
    </location>
</feature>
<gene>
    <name type="primary">inx-6</name>
    <name type="synonym">opu-6</name>
    <name type="ORF">C36H8.2</name>
</gene>
<comment type="function">
    <text evidence="2">Structural component of the gap junctions.</text>
</comment>
<comment type="subcellular location">
    <subcellularLocation>
        <location evidence="4">Cell membrane</location>
        <topology evidence="3">Multi-pass membrane protein</topology>
    </subcellularLocation>
    <subcellularLocation>
        <location evidence="1">Cell junction</location>
        <location evidence="1">Gap junction</location>
    </subcellularLocation>
</comment>
<comment type="similarity">
    <text evidence="3">Belongs to the pannexin family.</text>
</comment>
<dbReference type="EMBL" id="Z69658">
    <property type="protein sequence ID" value="CAB60997.1"/>
    <property type="molecule type" value="Genomic_DNA"/>
</dbReference>
<dbReference type="EMBL" id="U59213">
    <property type="protein sequence ID" value="AAB09672.1"/>
    <property type="molecule type" value="mRNA"/>
</dbReference>
<dbReference type="RefSeq" id="NP_502435.1">
    <property type="nucleotide sequence ID" value="NM_070034.5"/>
</dbReference>
<dbReference type="PDB" id="5H1Q">
    <property type="method" value="EM"/>
    <property type="resolution" value="3.30 A"/>
    <property type="chains" value="A/B/C/D/E/F/G/H=1-389"/>
</dbReference>
<dbReference type="PDB" id="5H1R">
    <property type="method" value="EM"/>
    <property type="resolution" value="3.60 A"/>
    <property type="chains" value="A/B/C/D/E/F/G/H/I/J/K/L/M/N/O/P=1-389"/>
</dbReference>
<dbReference type="PDB" id="6KFF">
    <property type="method" value="EM"/>
    <property type="resolution" value="3.80 A"/>
    <property type="chains" value="A/B/C/D/E/F/G/H=1-389"/>
</dbReference>
<dbReference type="PDB" id="6KFG">
    <property type="method" value="EM"/>
    <property type="resolution" value="3.80 A"/>
    <property type="chains" value="A/B/C/D/E/F/G/H=1-389"/>
</dbReference>
<dbReference type="PDB" id="6KFH">
    <property type="method" value="EM"/>
    <property type="resolution" value="3.60 A"/>
    <property type="chains" value="A/B/C/D/E/F/G/H=1-389"/>
</dbReference>
<dbReference type="PDBsum" id="5H1Q"/>
<dbReference type="PDBsum" id="5H1R"/>
<dbReference type="PDBsum" id="6KFF"/>
<dbReference type="PDBsum" id="6KFG"/>
<dbReference type="PDBsum" id="6KFH"/>
<dbReference type="EMDB" id="EMD-9570"/>
<dbReference type="EMDB" id="EMD-9571"/>
<dbReference type="EMDB" id="EMD-9971"/>
<dbReference type="EMDB" id="EMD-9972"/>
<dbReference type="EMDB" id="EMD-9973"/>
<dbReference type="SMR" id="Q9U3N4"/>
<dbReference type="BioGRID" id="43323">
    <property type="interactions" value="2"/>
</dbReference>
<dbReference type="FunCoup" id="Q9U3N4">
    <property type="interactions" value="164"/>
</dbReference>
<dbReference type="STRING" id="6239.C36H8.2.1"/>
<dbReference type="TCDB" id="1.A.25.1.7">
    <property type="family name" value="the gap junction-forming innexin (innexin) family"/>
</dbReference>
<dbReference type="PaxDb" id="6239-C36H8.2"/>
<dbReference type="PeptideAtlas" id="Q9U3N4"/>
<dbReference type="EnsemblMetazoa" id="C36H8.2.1">
    <property type="protein sequence ID" value="C36H8.2.1"/>
    <property type="gene ID" value="WBGene00002128"/>
</dbReference>
<dbReference type="GeneID" id="178231"/>
<dbReference type="KEGG" id="cel:CELE_C36H8.2"/>
<dbReference type="UCSC" id="C36H8.2">
    <property type="organism name" value="c. elegans"/>
</dbReference>
<dbReference type="AGR" id="WB:WBGene00002128"/>
<dbReference type="CTD" id="178231"/>
<dbReference type="WormBase" id="C36H8.2">
    <property type="protein sequence ID" value="CE24831"/>
    <property type="gene ID" value="WBGene00002128"/>
    <property type="gene designation" value="inx-6"/>
</dbReference>
<dbReference type="eggNOG" id="ENOG502SI7H">
    <property type="taxonomic scope" value="Eukaryota"/>
</dbReference>
<dbReference type="HOGENOM" id="CLU_035763_0_1_1"/>
<dbReference type="InParanoid" id="Q9U3N4"/>
<dbReference type="OMA" id="NQYCYVH"/>
<dbReference type="OrthoDB" id="5867527at2759"/>
<dbReference type="PhylomeDB" id="Q9U3N4"/>
<dbReference type="PRO" id="PR:Q9U3N4"/>
<dbReference type="Proteomes" id="UP000001940">
    <property type="component" value="Chromosome IV"/>
</dbReference>
<dbReference type="Bgee" id="WBGene00002128">
    <property type="expression patterns" value="Expressed in pharyngeal muscle cell (C elegans) and 3 other cell types or tissues"/>
</dbReference>
<dbReference type="GO" id="GO:0005921">
    <property type="term" value="C:gap junction"/>
    <property type="evidence" value="ECO:0000250"/>
    <property type="project" value="UniProtKB"/>
</dbReference>
<dbReference type="GO" id="GO:0005886">
    <property type="term" value="C:plasma membrane"/>
    <property type="evidence" value="ECO:0000250"/>
    <property type="project" value="UniProtKB"/>
</dbReference>
<dbReference type="GO" id="GO:0005243">
    <property type="term" value="F:gap junction channel activity"/>
    <property type="evidence" value="ECO:0000250"/>
    <property type="project" value="UniProtKB"/>
</dbReference>
<dbReference type="GO" id="GO:0055077">
    <property type="term" value="F:gap junction hemi-channel activity"/>
    <property type="evidence" value="ECO:0000250"/>
    <property type="project" value="UniProtKB"/>
</dbReference>
<dbReference type="GO" id="GO:0034220">
    <property type="term" value="P:monoatomic ion transmembrane transport"/>
    <property type="evidence" value="ECO:0007669"/>
    <property type="project" value="UniProtKB-KW"/>
</dbReference>
<dbReference type="InterPro" id="IPR000990">
    <property type="entry name" value="Innexin"/>
</dbReference>
<dbReference type="PANTHER" id="PTHR11893">
    <property type="entry name" value="INNEXIN"/>
    <property type="match status" value="1"/>
</dbReference>
<dbReference type="PANTHER" id="PTHR11893:SF10">
    <property type="entry name" value="INNEXIN-6"/>
    <property type="match status" value="1"/>
</dbReference>
<dbReference type="Pfam" id="PF00876">
    <property type="entry name" value="Innexin"/>
    <property type="match status" value="1"/>
</dbReference>
<dbReference type="PRINTS" id="PR01262">
    <property type="entry name" value="INNEXIN"/>
</dbReference>
<dbReference type="PROSITE" id="PS51013">
    <property type="entry name" value="PANNEXIN"/>
    <property type="match status" value="1"/>
</dbReference>
<keyword id="KW-0002">3D-structure</keyword>
<keyword id="KW-0965">Cell junction</keyword>
<keyword id="KW-1003">Cell membrane</keyword>
<keyword id="KW-0303">Gap junction</keyword>
<keyword id="KW-0407">Ion channel</keyword>
<keyword id="KW-0406">Ion transport</keyword>
<keyword id="KW-0472">Membrane</keyword>
<keyword id="KW-1185">Reference proteome</keyword>
<keyword id="KW-0812">Transmembrane</keyword>
<keyword id="KW-1133">Transmembrane helix</keyword>
<keyword id="KW-0813">Transport</keyword>
<name>INX6_CAEEL</name>
<reference key="1">
    <citation type="journal article" date="1998" name="Science">
        <title>Genome sequence of the nematode C. elegans: a platform for investigating biology.</title>
        <authorList>
            <consortium name="The C. elegans sequencing consortium"/>
        </authorList>
    </citation>
    <scope>NUCLEOTIDE SEQUENCE [LARGE SCALE GENOMIC DNA]</scope>
    <source>
        <strain>Bristol N2</strain>
    </source>
</reference>
<reference key="2">
    <citation type="journal article" date="1996" name="J. Cell Biol.">
        <title>eat-5 and unc-7 represent a multigene family in Caenorhabditis elegans involved in cell-cell coupling.</title>
        <authorList>
            <person name="Starich T.A."/>
            <person name="Lee R.Y."/>
            <person name="Panzarella C."/>
            <person name="Avery L."/>
            <person name="Shaw J.E."/>
        </authorList>
    </citation>
    <scope>NUCLEOTIDE SEQUENCE [MRNA] OF 27-389</scope>
</reference>
<protein>
    <recommendedName>
        <fullName>Innexin-6</fullName>
    </recommendedName>
    <alternativeName>
        <fullName>Protein opu-6</fullName>
    </alternativeName>
</protein>
<sequence>MASQVGAINSVNALISRVFVQPKGDLADRLNSRVTVVILAVSSALLLSSHFIGDPITCWTPAQFNAQWVNFVNQYCFVHGTYFVPLDQQLAFEEEERTKVSIQYYQWVPYVFALQAFLFYIPRFIWKAMIAYSGYDLAAAVKYVDRFWSENRDKDDKFKTRLAAFEGRPSVYIWDGIRLARKKRSRNMALFYTLSTVWQAVNAWIQFYILTQLLDSSIYTLWGPSILGDLLQGNDWQTTGHFPRIVHCDFNRRRPASVQLDTVLCVLTLNIYYEKLFIFLWFWLVFVAVVSTVNCFKWIYYLCNKTKAQKTIKNYLSTAPIKSTISDDQFFSALGEDGLFIMDQMALNLGDIPASYLTISMRNICQDFIESEDYIDEERTPFVKSIKHT</sequence>